<comment type="function">
    <text evidence="1">Cobalamin (vitamin B12) cytosolic chaperone that catalyzes the reductive decyanation of cyanocob(III)alamin (cyanocobalamin, CNCbl) to yield cob(II)alamin and cyanide, using FAD or FMN as cofactors and NADPH as cosubstrate. Cyanocobalamin constitutes the inactive form of vitamin B12 introduced from the diet, and is converted into the active cofactors methylcobalamin (MeCbl) involved in methionine biosynthesis, and 5'-deoxyadenosylcobalamin (AdoCbl) involved in the TCA cycle. Forms a complex with the lysosomal transporter ABCD4 and its chaperone LMBRD1, to transport cobalamin across the lysosomal membrane into the cytosol. The processing of cobalamin in the cytosol occurs in a multiprotein complex composed of at least MMACHC, MMADHC, MTRR (methionine synthase reductase) and MTR (methionine synthase) which may contribute to shuttle safely and efficiently cobalamin towards MTR in order to produce methionine. Also acts as a glutathione transferase by catalyzing the dealkylation of the alkylcob(III)alamins MeCbl and AdoCbl, using the thiolate of glutathione for nucleophilic displacement to generate cob(I)alamin and the corresponding glutathione thioether. The conversion of incoming MeCbl or AdoCbl into a common intermediate cob(I)alamin is necessary to meet the cellular needs for both cofactors. Cysteine and homocysteine cannot substitute for glutathione in this reaction.</text>
</comment>
<comment type="catalytic activity">
    <reaction evidence="1">
        <text>2 cob(II)alamin-[cyanocobalamin reductase] + 2 hydrogen cyanide + NADP(+) = 2 cyanocob(III)alamin + 2 apo-[cyanocobalamin reductase] + NADPH + H(+)</text>
        <dbReference type="Rhea" id="RHEA:16113"/>
        <dbReference type="Rhea" id="RHEA-COMP:14717"/>
        <dbReference type="Rhea" id="RHEA-COMP:14718"/>
        <dbReference type="ChEBI" id="CHEBI:15378"/>
        <dbReference type="ChEBI" id="CHEBI:16304"/>
        <dbReference type="ChEBI" id="CHEBI:17439"/>
        <dbReference type="ChEBI" id="CHEBI:18407"/>
        <dbReference type="ChEBI" id="CHEBI:57783"/>
        <dbReference type="ChEBI" id="CHEBI:58349"/>
        <dbReference type="ChEBI" id="CHEBI:83228"/>
        <dbReference type="EC" id="1.16.1.6"/>
    </reaction>
    <physiologicalReaction direction="right-to-left" evidence="1">
        <dbReference type="Rhea" id="RHEA:16115"/>
    </physiologicalReaction>
</comment>
<comment type="catalytic activity">
    <reaction evidence="1">
        <text>apo-[alkylcobalamin reductase] + an R-cob(III)alamin + glutathione = cob(I)alamin-[alkylcobalamin reductase] + an S-substituted glutathione + H(+)</text>
        <dbReference type="Rhea" id="RHEA:40719"/>
        <dbReference type="Rhea" id="RHEA-COMP:14730"/>
        <dbReference type="Rhea" id="RHEA-COMP:14731"/>
        <dbReference type="ChEBI" id="CHEBI:15378"/>
        <dbReference type="ChEBI" id="CHEBI:57925"/>
        <dbReference type="ChEBI" id="CHEBI:60488"/>
        <dbReference type="ChEBI" id="CHEBI:83228"/>
        <dbReference type="ChEBI" id="CHEBI:90779"/>
        <dbReference type="ChEBI" id="CHEBI:140785"/>
        <dbReference type="EC" id="2.5.1.151"/>
    </reaction>
    <physiologicalReaction direction="left-to-right" evidence="1">
        <dbReference type="Rhea" id="RHEA:40720"/>
    </physiologicalReaction>
</comment>
<comment type="catalytic activity">
    <reaction evidence="1">
        <text>apo-[alkylcobalamin reductase] + methylcob(III)alamin + glutathione = S-methyl glutathione + cob(I)alamin-[alkylcobalamin reductase] + H(+)</text>
        <dbReference type="Rhea" id="RHEA:63132"/>
        <dbReference type="Rhea" id="RHEA-COMP:14730"/>
        <dbReference type="Rhea" id="RHEA-COMP:14731"/>
        <dbReference type="ChEBI" id="CHEBI:15378"/>
        <dbReference type="ChEBI" id="CHEBI:28115"/>
        <dbReference type="ChEBI" id="CHEBI:57925"/>
        <dbReference type="ChEBI" id="CHEBI:60488"/>
        <dbReference type="ChEBI" id="CHEBI:83228"/>
        <dbReference type="ChEBI" id="CHEBI:141467"/>
        <dbReference type="EC" id="2.5.1.151"/>
    </reaction>
    <physiologicalReaction direction="left-to-right" evidence="1">
        <dbReference type="Rhea" id="RHEA:63133"/>
    </physiologicalReaction>
</comment>
<comment type="catalytic activity">
    <reaction evidence="1">
        <text>apo-[alkylcobalamin reductase] + adenosylcob(III)alamin + glutathione = S-adenosylglutathione + cob(I)alamin-[alkylcobalamin reductase] + H(+)</text>
        <dbReference type="Rhea" id="RHEA:63136"/>
        <dbReference type="Rhea" id="RHEA-COMP:14730"/>
        <dbReference type="Rhea" id="RHEA-COMP:14731"/>
        <dbReference type="ChEBI" id="CHEBI:15378"/>
        <dbReference type="ChEBI" id="CHEBI:18408"/>
        <dbReference type="ChEBI" id="CHEBI:57925"/>
        <dbReference type="ChEBI" id="CHEBI:60488"/>
        <dbReference type="ChEBI" id="CHEBI:83228"/>
        <dbReference type="ChEBI" id="CHEBI:146184"/>
        <dbReference type="EC" id="2.5.1.151"/>
    </reaction>
    <physiologicalReaction direction="left-to-right" evidence="1">
        <dbReference type="Rhea" id="RHEA:63137"/>
    </physiologicalReaction>
</comment>
<comment type="cofactor">
    <cofactor evidence="1">
        <name>FAD</name>
        <dbReference type="ChEBI" id="CHEBI:57692"/>
    </cofactor>
    <cofactor evidence="1">
        <name>FMN</name>
        <dbReference type="ChEBI" id="CHEBI:58210"/>
    </cofactor>
    <text evidence="1">Can utilize both FAD and FMN.</text>
</comment>
<comment type="subunit">
    <text evidence="1">Monomer in the absence of bound substrate. Homodimer; dimerization is triggered by binding to FMN or adenosylcobalamin. Interacts with LMBRD1 and ABCD4; the interaction ensures the transport of cobalamin from the lysosome to the cytoplasm. Forms a multiprotein complex with MMADHC, MTR and MTRR; the interaction with MTR could modulate MMACHC-dependent processing of cobalamin. Heterodimer with MMADHC; the interaction might play a role in the regulation of the balance between AdoCbl and MeCbl synthesis.</text>
</comment>
<comment type="subcellular location">
    <subcellularLocation>
        <location evidence="1">Cytoplasm</location>
        <location evidence="1">Cytosol</location>
    </subcellularLocation>
</comment>
<comment type="tissue specificity">
    <text evidence="3 4">Detected in liver and kidney (at protein level) (PubMed:21697092). Detected in embryos (PubMed:24889031).</text>
</comment>
<comment type="disruption phenotype">
    <text evidence="4">Complete embryonic lethality. All die before 3.5 dpc.</text>
</comment>
<comment type="similarity">
    <text evidence="5">Belongs to the MMACHC family.</text>
</comment>
<comment type="sequence caution" evidence="5">
    <conflict type="erroneous initiation">
        <sequence resource="EMBL-CDS" id="AAH54756"/>
    </conflict>
</comment>
<comment type="sequence caution" evidence="5">
    <conflict type="frameshift">
        <sequence resource="EMBL-CDS" id="BAB25214"/>
    </conflict>
</comment>
<comment type="sequence caution" evidence="5">
    <conflict type="erroneous initiation">
        <sequence resource="EMBL-CDS" id="BAC39135"/>
    </conflict>
</comment>
<reference key="1">
    <citation type="journal article" date="2005" name="Science">
        <title>The transcriptional landscape of the mammalian genome.</title>
        <authorList>
            <person name="Carninci P."/>
            <person name="Kasukawa T."/>
            <person name="Katayama S."/>
            <person name="Gough J."/>
            <person name="Frith M.C."/>
            <person name="Maeda N."/>
            <person name="Oyama R."/>
            <person name="Ravasi T."/>
            <person name="Lenhard B."/>
            <person name="Wells C."/>
            <person name="Kodzius R."/>
            <person name="Shimokawa K."/>
            <person name="Bajic V.B."/>
            <person name="Brenner S.E."/>
            <person name="Batalov S."/>
            <person name="Forrest A.R."/>
            <person name="Zavolan M."/>
            <person name="Davis M.J."/>
            <person name="Wilming L.G."/>
            <person name="Aidinis V."/>
            <person name="Allen J.E."/>
            <person name="Ambesi-Impiombato A."/>
            <person name="Apweiler R."/>
            <person name="Aturaliya R.N."/>
            <person name="Bailey T.L."/>
            <person name="Bansal M."/>
            <person name="Baxter L."/>
            <person name="Beisel K.W."/>
            <person name="Bersano T."/>
            <person name="Bono H."/>
            <person name="Chalk A.M."/>
            <person name="Chiu K.P."/>
            <person name="Choudhary V."/>
            <person name="Christoffels A."/>
            <person name="Clutterbuck D.R."/>
            <person name="Crowe M.L."/>
            <person name="Dalla E."/>
            <person name="Dalrymple B.P."/>
            <person name="de Bono B."/>
            <person name="Della Gatta G."/>
            <person name="di Bernardo D."/>
            <person name="Down T."/>
            <person name="Engstrom P."/>
            <person name="Fagiolini M."/>
            <person name="Faulkner G."/>
            <person name="Fletcher C.F."/>
            <person name="Fukushima T."/>
            <person name="Furuno M."/>
            <person name="Futaki S."/>
            <person name="Gariboldi M."/>
            <person name="Georgii-Hemming P."/>
            <person name="Gingeras T.R."/>
            <person name="Gojobori T."/>
            <person name="Green R.E."/>
            <person name="Gustincich S."/>
            <person name="Harbers M."/>
            <person name="Hayashi Y."/>
            <person name="Hensch T.K."/>
            <person name="Hirokawa N."/>
            <person name="Hill D."/>
            <person name="Huminiecki L."/>
            <person name="Iacono M."/>
            <person name="Ikeo K."/>
            <person name="Iwama A."/>
            <person name="Ishikawa T."/>
            <person name="Jakt M."/>
            <person name="Kanapin A."/>
            <person name="Katoh M."/>
            <person name="Kawasawa Y."/>
            <person name="Kelso J."/>
            <person name="Kitamura H."/>
            <person name="Kitano H."/>
            <person name="Kollias G."/>
            <person name="Krishnan S.P."/>
            <person name="Kruger A."/>
            <person name="Kummerfeld S.K."/>
            <person name="Kurochkin I.V."/>
            <person name="Lareau L.F."/>
            <person name="Lazarevic D."/>
            <person name="Lipovich L."/>
            <person name="Liu J."/>
            <person name="Liuni S."/>
            <person name="McWilliam S."/>
            <person name="Madan Babu M."/>
            <person name="Madera M."/>
            <person name="Marchionni L."/>
            <person name="Matsuda H."/>
            <person name="Matsuzawa S."/>
            <person name="Miki H."/>
            <person name="Mignone F."/>
            <person name="Miyake S."/>
            <person name="Morris K."/>
            <person name="Mottagui-Tabar S."/>
            <person name="Mulder N."/>
            <person name="Nakano N."/>
            <person name="Nakauchi H."/>
            <person name="Ng P."/>
            <person name="Nilsson R."/>
            <person name="Nishiguchi S."/>
            <person name="Nishikawa S."/>
            <person name="Nori F."/>
            <person name="Ohara O."/>
            <person name="Okazaki Y."/>
            <person name="Orlando V."/>
            <person name="Pang K.C."/>
            <person name="Pavan W.J."/>
            <person name="Pavesi G."/>
            <person name="Pesole G."/>
            <person name="Petrovsky N."/>
            <person name="Piazza S."/>
            <person name="Reed J."/>
            <person name="Reid J.F."/>
            <person name="Ring B.Z."/>
            <person name="Ringwald M."/>
            <person name="Rost B."/>
            <person name="Ruan Y."/>
            <person name="Salzberg S.L."/>
            <person name="Sandelin A."/>
            <person name="Schneider C."/>
            <person name="Schoenbach C."/>
            <person name="Sekiguchi K."/>
            <person name="Semple C.A."/>
            <person name="Seno S."/>
            <person name="Sessa L."/>
            <person name="Sheng Y."/>
            <person name="Shibata Y."/>
            <person name="Shimada H."/>
            <person name="Shimada K."/>
            <person name="Silva D."/>
            <person name="Sinclair B."/>
            <person name="Sperling S."/>
            <person name="Stupka E."/>
            <person name="Sugiura K."/>
            <person name="Sultana R."/>
            <person name="Takenaka Y."/>
            <person name="Taki K."/>
            <person name="Tammoja K."/>
            <person name="Tan S.L."/>
            <person name="Tang S."/>
            <person name="Taylor M.S."/>
            <person name="Tegner J."/>
            <person name="Teichmann S.A."/>
            <person name="Ueda H.R."/>
            <person name="van Nimwegen E."/>
            <person name="Verardo R."/>
            <person name="Wei C.L."/>
            <person name="Yagi K."/>
            <person name="Yamanishi H."/>
            <person name="Zabarovsky E."/>
            <person name="Zhu S."/>
            <person name="Zimmer A."/>
            <person name="Hide W."/>
            <person name="Bult C."/>
            <person name="Grimmond S.M."/>
            <person name="Teasdale R.D."/>
            <person name="Liu E.T."/>
            <person name="Brusic V."/>
            <person name="Quackenbush J."/>
            <person name="Wahlestedt C."/>
            <person name="Mattick J.S."/>
            <person name="Hume D.A."/>
            <person name="Kai C."/>
            <person name="Sasaki D."/>
            <person name="Tomaru Y."/>
            <person name="Fukuda S."/>
            <person name="Kanamori-Katayama M."/>
            <person name="Suzuki M."/>
            <person name="Aoki J."/>
            <person name="Arakawa T."/>
            <person name="Iida J."/>
            <person name="Imamura K."/>
            <person name="Itoh M."/>
            <person name="Kato T."/>
            <person name="Kawaji H."/>
            <person name="Kawagashira N."/>
            <person name="Kawashima T."/>
            <person name="Kojima M."/>
            <person name="Kondo S."/>
            <person name="Konno H."/>
            <person name="Nakano K."/>
            <person name="Ninomiya N."/>
            <person name="Nishio T."/>
            <person name="Okada M."/>
            <person name="Plessy C."/>
            <person name="Shibata K."/>
            <person name="Shiraki T."/>
            <person name="Suzuki S."/>
            <person name="Tagami M."/>
            <person name="Waki K."/>
            <person name="Watahiki A."/>
            <person name="Okamura-Oho Y."/>
            <person name="Suzuki H."/>
            <person name="Kawai J."/>
            <person name="Hayashizaki Y."/>
        </authorList>
    </citation>
    <scope>NUCLEOTIDE SEQUENCE [LARGE SCALE MRNA]</scope>
    <source>
        <strain>C57BL/6J</strain>
        <tissue>Brain</tissue>
        <tissue>Pancreas</tissue>
    </source>
</reference>
<reference key="2">
    <citation type="journal article" date="2004" name="Genome Res.">
        <title>The status, quality, and expansion of the NIH full-length cDNA project: the Mammalian Gene Collection (MGC).</title>
        <authorList>
            <consortium name="The MGC Project Team"/>
        </authorList>
    </citation>
    <scope>NUCLEOTIDE SEQUENCE [LARGE SCALE MRNA]</scope>
    <source>
        <strain>C57BL/6J</strain>
        <tissue>Brain</tissue>
    </source>
</reference>
<reference key="3">
    <citation type="journal article" date="2011" name="J. Biol. Chem.">
        <title>Structural basis of multifunctionality in a vitamin B12-processing enzyme.</title>
        <authorList>
            <person name="Koutmos M."/>
            <person name="Gherasim C."/>
            <person name="Smith J.L."/>
            <person name="Banerjee R."/>
        </authorList>
    </citation>
    <scope>TISSUE SPECIFICITY</scope>
</reference>
<reference key="4">
    <citation type="journal article" date="2014" name="Mol. Genet. Metab.">
        <title>The Mmachc gene is required for pre-implantation embryogenesis in the mouse.</title>
        <authorList>
            <person name="Moreno-Garcia M.A."/>
            <person name="Pupavac M."/>
            <person name="Rosenblatt D.S."/>
            <person name="Tremblay M.L."/>
            <person name="Jerome-Majewska L.A."/>
        </authorList>
    </citation>
    <scope>DISRUPTION PHENOTYPE</scope>
    <scope>TISSUE SPECIFICITY</scope>
</reference>
<name>MMAC_MOUSE</name>
<accession>Q9CZD0</accession>
<accession>Q9D8S7</accession>
<sequence length="279" mass="31648">MEPRVAELKQKIEDTLCPFGFEVYPFQVAWYNELLPPAFHLPFPGPTLAFLVLSTPAMFDRALKPFLKSCHFQTLRDPVDQCVSYHLRSVTEKFPEVHMEVIADYEVHPNRRPKILAQTAAHVAGAAYYYQRQDVDADPWGTQHIAGVCIHPRFGGWFAIRGVMLLPGIEVPNLPPRKPPDCVPTRAGRITLLEGFNFHWRDWTYRDAVTPEERYSEEQKIYFSTPPAQRLALLGLAQPSEHPSTTSELPLSLLTKPQNSRRARSWLSPSVSPPVSPGP</sequence>
<feature type="chain" id="PRO_0000076259" description="Cyanocobalamin reductase / alkylcobalamin dealkylase">
    <location>
        <begin position="1"/>
        <end position="279"/>
    </location>
</feature>
<feature type="region of interest" description="Disordered" evidence="2">
    <location>
        <begin position="239"/>
        <end position="279"/>
    </location>
</feature>
<feature type="compositionally biased region" description="Low complexity" evidence="2">
    <location>
        <begin position="243"/>
        <end position="257"/>
    </location>
</feature>
<feature type="binding site" evidence="1">
    <location>
        <position position="104"/>
    </location>
    <ligand>
        <name>substrate</name>
    </ligand>
</feature>
<feature type="binding site" evidence="1">
    <location>
        <begin position="115"/>
        <end position="118"/>
    </location>
    <ligand>
        <name>substrate</name>
    </ligand>
</feature>
<feature type="binding site" evidence="1">
    <location>
        <begin position="129"/>
        <end position="131"/>
    </location>
    <ligand>
        <name>substrate</name>
    </ligand>
</feature>
<feature type="binding site" evidence="1">
    <location>
        <position position="149"/>
    </location>
    <ligand>
        <name>substrate</name>
    </ligand>
</feature>
<feature type="binding site" evidence="1">
    <location>
        <position position="160"/>
    </location>
    <ligand>
        <name>substrate</name>
    </ligand>
</feature>
<feature type="modified residue" description="Phosphoserine" evidence="1">
    <location>
        <position position="247"/>
    </location>
</feature>
<feature type="modified residue" description="Phosphoserine" evidence="1">
    <location>
        <position position="272"/>
    </location>
</feature>
<feature type="modified residue" description="Phosphoserine" evidence="1">
    <location>
        <position position="276"/>
    </location>
</feature>
<feature type="sequence conflict" description="In Ref. 1; BAB28451." evidence="5" ref="1">
    <original>D</original>
    <variation>G</variation>
    <location>
        <position position="14"/>
    </location>
</feature>
<feature type="sequence conflict" description="In Ref. 1; BAB28451." evidence="5" ref="1">
    <original>P</original>
    <variation>H</variation>
    <location>
        <position position="239"/>
    </location>
</feature>
<feature type="sequence conflict" description="In Ref. 1; BAB28451." evidence="5" ref="1">
    <original>K</original>
    <variation>T</variation>
    <location>
        <position position="256"/>
    </location>
</feature>
<feature type="sequence conflict" description="In Ref. 1; BAB28451." evidence="5" ref="1">
    <original>S</original>
    <variation>Y</variation>
    <location>
        <position position="260"/>
    </location>
</feature>
<evidence type="ECO:0000250" key="1">
    <source>
        <dbReference type="UniProtKB" id="Q9Y4U1"/>
    </source>
</evidence>
<evidence type="ECO:0000256" key="2">
    <source>
        <dbReference type="SAM" id="MobiDB-lite"/>
    </source>
</evidence>
<evidence type="ECO:0000269" key="3">
    <source>
    </source>
</evidence>
<evidence type="ECO:0000269" key="4">
    <source>
    </source>
</evidence>
<evidence type="ECO:0000305" key="5"/>
<evidence type="ECO:0000312" key="6">
    <source>
        <dbReference type="MGI" id="MGI:1914346"/>
    </source>
</evidence>
<proteinExistence type="evidence at protein level"/>
<gene>
    <name evidence="6" type="primary">Mmachc</name>
</gene>
<protein>
    <recommendedName>
        <fullName>Cyanocobalamin reductase / alkylcobalamin dealkylase</fullName>
    </recommendedName>
    <alternativeName>
        <fullName>Alkylcobalamin:glutathione S-alkyltransferase</fullName>
        <ecNumber evidence="1">2.5.1.151</ecNumber>
    </alternativeName>
    <alternativeName>
        <fullName>CblC</fullName>
    </alternativeName>
    <alternativeName>
        <fullName>Cyanocobalamin reductase (cyanide-eliminating)</fullName>
        <ecNumber evidence="1">1.16.1.6</ecNumber>
    </alternativeName>
    <alternativeName>
        <fullName>Methylmalonic aciduria and homocystinuria type C protein</fullName>
        <shortName>MMACHC</shortName>
    </alternativeName>
</protein>
<organism>
    <name type="scientific">Mus musculus</name>
    <name type="common">Mouse</name>
    <dbReference type="NCBI Taxonomy" id="10090"/>
    <lineage>
        <taxon>Eukaryota</taxon>
        <taxon>Metazoa</taxon>
        <taxon>Chordata</taxon>
        <taxon>Craniata</taxon>
        <taxon>Vertebrata</taxon>
        <taxon>Euteleostomi</taxon>
        <taxon>Mammalia</taxon>
        <taxon>Eutheria</taxon>
        <taxon>Euarchontoglires</taxon>
        <taxon>Glires</taxon>
        <taxon>Rodentia</taxon>
        <taxon>Myomorpha</taxon>
        <taxon>Muroidea</taxon>
        <taxon>Muridae</taxon>
        <taxon>Murinae</taxon>
        <taxon>Mus</taxon>
        <taxon>Mus</taxon>
    </lineage>
</organism>
<dbReference type="EC" id="2.5.1.151" evidence="1"/>
<dbReference type="EC" id="1.16.1.6" evidence="1"/>
<dbReference type="EMBL" id="AK007725">
    <property type="protein sequence ID" value="BAB25214.1"/>
    <property type="status" value="ALT_FRAME"/>
    <property type="molecule type" value="mRNA"/>
</dbReference>
<dbReference type="EMBL" id="AK012761">
    <property type="protein sequence ID" value="BAB28451.1"/>
    <property type="molecule type" value="mRNA"/>
</dbReference>
<dbReference type="EMBL" id="AK084194">
    <property type="protein sequence ID" value="BAC39135.1"/>
    <property type="status" value="ALT_INIT"/>
    <property type="molecule type" value="mRNA"/>
</dbReference>
<dbReference type="EMBL" id="BC054756">
    <property type="protein sequence ID" value="AAH54756.1"/>
    <property type="status" value="ALT_INIT"/>
    <property type="molecule type" value="mRNA"/>
</dbReference>
<dbReference type="CCDS" id="CCDS51278.1"/>
<dbReference type="RefSeq" id="NP_080238.2">
    <property type="nucleotide sequence ID" value="NM_025962.3"/>
</dbReference>
<dbReference type="SMR" id="Q9CZD0"/>
<dbReference type="CORUM" id="Q9CZD0"/>
<dbReference type="FunCoup" id="Q9CZD0">
    <property type="interactions" value="1481"/>
</dbReference>
<dbReference type="STRING" id="10090.ENSMUSP00000030453"/>
<dbReference type="GlyGen" id="Q9CZD0">
    <property type="glycosylation" value="1 site"/>
</dbReference>
<dbReference type="iPTMnet" id="Q9CZD0"/>
<dbReference type="PhosphoSitePlus" id="Q9CZD0"/>
<dbReference type="PaxDb" id="10090-ENSMUSP00000030453"/>
<dbReference type="ProteomicsDB" id="291469"/>
<dbReference type="Pumba" id="Q9CZD0"/>
<dbReference type="ABCD" id="Q9CZD0">
    <property type="antibodies" value="1 sequenced antibody"/>
</dbReference>
<dbReference type="Antibodypedia" id="32641">
    <property type="antibodies" value="411 antibodies from 32 providers"/>
</dbReference>
<dbReference type="DNASU" id="67096"/>
<dbReference type="Ensembl" id="ENSMUST00000030453.5">
    <property type="protein sequence ID" value="ENSMUSP00000030453.5"/>
    <property type="gene ID" value="ENSMUSG00000028690.5"/>
</dbReference>
<dbReference type="GeneID" id="67096"/>
<dbReference type="KEGG" id="mmu:67096"/>
<dbReference type="UCSC" id="uc008uhe.1">
    <property type="organism name" value="mouse"/>
</dbReference>
<dbReference type="AGR" id="MGI:1914346"/>
<dbReference type="CTD" id="25974"/>
<dbReference type="MGI" id="MGI:1914346">
    <property type="gene designation" value="Mmachc"/>
</dbReference>
<dbReference type="VEuPathDB" id="HostDB:ENSMUSG00000028690"/>
<dbReference type="eggNOG" id="KOG4552">
    <property type="taxonomic scope" value="Eukaryota"/>
</dbReference>
<dbReference type="GeneTree" id="ENSGT00390000003464"/>
<dbReference type="HOGENOM" id="CLU_095722_0_0_1"/>
<dbReference type="InParanoid" id="Q9CZD0"/>
<dbReference type="OMA" id="FQVGWYN"/>
<dbReference type="OrthoDB" id="409189at2759"/>
<dbReference type="PhylomeDB" id="Q9CZD0"/>
<dbReference type="TreeFam" id="TF332476"/>
<dbReference type="Reactome" id="R-MMU-9759218">
    <property type="pathway name" value="Cobalamin (Cbl) metabolism"/>
</dbReference>
<dbReference type="BioGRID-ORCS" id="67096">
    <property type="hits" value="18 hits in 76 CRISPR screens"/>
</dbReference>
<dbReference type="ChiTaRS" id="Mmachc">
    <property type="organism name" value="mouse"/>
</dbReference>
<dbReference type="PRO" id="PR:Q9CZD0"/>
<dbReference type="Proteomes" id="UP000000589">
    <property type="component" value="Chromosome 4"/>
</dbReference>
<dbReference type="RNAct" id="Q9CZD0">
    <property type="molecule type" value="protein"/>
</dbReference>
<dbReference type="Bgee" id="ENSMUSG00000028690">
    <property type="expression patterns" value="Expressed in myocardium of ventricle and 252 other cell types or tissues"/>
</dbReference>
<dbReference type="GO" id="GO:0005829">
    <property type="term" value="C:cytosol"/>
    <property type="evidence" value="ECO:0000266"/>
    <property type="project" value="MGI"/>
</dbReference>
<dbReference type="GO" id="GO:0005739">
    <property type="term" value="C:mitochondrion"/>
    <property type="evidence" value="ECO:0007005"/>
    <property type="project" value="MGI"/>
</dbReference>
<dbReference type="GO" id="GO:0031419">
    <property type="term" value="F:cobalamin binding"/>
    <property type="evidence" value="ECO:0007669"/>
    <property type="project" value="UniProtKB-KW"/>
</dbReference>
<dbReference type="GO" id="GO:0033787">
    <property type="term" value="F:cyanocobalamin reductase (cyanide-eliminating) (NADP+) activity"/>
    <property type="evidence" value="ECO:0000250"/>
    <property type="project" value="UniProtKB"/>
</dbReference>
<dbReference type="GO" id="GO:0032451">
    <property type="term" value="F:demethylase activity"/>
    <property type="evidence" value="ECO:0000250"/>
    <property type="project" value="UniProtKB"/>
</dbReference>
<dbReference type="GO" id="GO:0071949">
    <property type="term" value="F:FAD binding"/>
    <property type="evidence" value="ECO:0000250"/>
    <property type="project" value="UniProtKB"/>
</dbReference>
<dbReference type="GO" id="GO:0043295">
    <property type="term" value="F:glutathione binding"/>
    <property type="evidence" value="ECO:0000250"/>
    <property type="project" value="UniProtKB"/>
</dbReference>
<dbReference type="GO" id="GO:0016491">
    <property type="term" value="F:oxidoreductase activity"/>
    <property type="evidence" value="ECO:0000250"/>
    <property type="project" value="UniProtKB"/>
</dbReference>
<dbReference type="GO" id="GO:0042803">
    <property type="term" value="F:protein homodimerization activity"/>
    <property type="evidence" value="ECO:0007669"/>
    <property type="project" value="Ensembl"/>
</dbReference>
<dbReference type="GO" id="GO:0016740">
    <property type="term" value="F:transferase activity"/>
    <property type="evidence" value="ECO:0007669"/>
    <property type="project" value="UniProtKB-KW"/>
</dbReference>
<dbReference type="GO" id="GO:0009235">
    <property type="term" value="P:cobalamin metabolic process"/>
    <property type="evidence" value="ECO:0000250"/>
    <property type="project" value="UniProtKB"/>
</dbReference>
<dbReference type="GO" id="GO:0070988">
    <property type="term" value="P:demethylation"/>
    <property type="evidence" value="ECO:0000250"/>
    <property type="project" value="UniProtKB"/>
</dbReference>
<dbReference type="GO" id="GO:0006749">
    <property type="term" value="P:glutathione metabolic process"/>
    <property type="evidence" value="ECO:0000250"/>
    <property type="project" value="UniProtKB"/>
</dbReference>
<dbReference type="CDD" id="cd12959">
    <property type="entry name" value="MMACHC-like"/>
    <property type="match status" value="1"/>
</dbReference>
<dbReference type="InterPro" id="IPR032037">
    <property type="entry name" value="MMACHC"/>
</dbReference>
<dbReference type="PANTHER" id="PTHR31457:SF2">
    <property type="entry name" value="CYANOCOBALAMIN REDUCTASE _ ALKYLCOBALAMIN DEALKYLASE"/>
    <property type="match status" value="1"/>
</dbReference>
<dbReference type="PANTHER" id="PTHR31457">
    <property type="entry name" value="METHYLMALONIC ACIDURIA AND HOMOCYSTINURIA TYPE C PROTEIN"/>
    <property type="match status" value="1"/>
</dbReference>
<dbReference type="Pfam" id="PF16690">
    <property type="entry name" value="MMACHC"/>
    <property type="match status" value="1"/>
</dbReference>
<keyword id="KW-0846">Cobalamin</keyword>
<keyword id="KW-0170">Cobalt</keyword>
<keyword id="KW-0963">Cytoplasm</keyword>
<keyword id="KW-0274">FAD</keyword>
<keyword id="KW-0285">Flavoprotein</keyword>
<keyword id="KW-0288">FMN</keyword>
<keyword id="KW-0521">NADP</keyword>
<keyword id="KW-0560">Oxidoreductase</keyword>
<keyword id="KW-0597">Phosphoprotein</keyword>
<keyword id="KW-1185">Reference proteome</keyword>
<keyword id="KW-0808">Transferase</keyword>